<proteinExistence type="inferred from homology"/>
<protein>
    <recommendedName>
        <fullName evidence="1">Small ribosomal subunit protein uS17</fullName>
    </recommendedName>
    <alternativeName>
        <fullName evidence="2">30S ribosomal protein S17</fullName>
    </alternativeName>
</protein>
<dbReference type="EMBL" id="CP000155">
    <property type="protein sequence ID" value="ABC32853.1"/>
    <property type="molecule type" value="Genomic_DNA"/>
</dbReference>
<dbReference type="RefSeq" id="WP_011399911.1">
    <property type="nucleotide sequence ID" value="NC_007645.1"/>
</dbReference>
<dbReference type="SMR" id="Q2S921"/>
<dbReference type="STRING" id="349521.HCH_06208"/>
<dbReference type="KEGG" id="hch:HCH_06208"/>
<dbReference type="eggNOG" id="COG0186">
    <property type="taxonomic scope" value="Bacteria"/>
</dbReference>
<dbReference type="HOGENOM" id="CLU_073626_1_1_6"/>
<dbReference type="OrthoDB" id="9811714at2"/>
<dbReference type="Proteomes" id="UP000000238">
    <property type="component" value="Chromosome"/>
</dbReference>
<dbReference type="GO" id="GO:0022627">
    <property type="term" value="C:cytosolic small ribosomal subunit"/>
    <property type="evidence" value="ECO:0007669"/>
    <property type="project" value="TreeGrafter"/>
</dbReference>
<dbReference type="GO" id="GO:0019843">
    <property type="term" value="F:rRNA binding"/>
    <property type="evidence" value="ECO:0007669"/>
    <property type="project" value="UniProtKB-UniRule"/>
</dbReference>
<dbReference type="GO" id="GO:0003735">
    <property type="term" value="F:structural constituent of ribosome"/>
    <property type="evidence" value="ECO:0007669"/>
    <property type="project" value="InterPro"/>
</dbReference>
<dbReference type="GO" id="GO:0006412">
    <property type="term" value="P:translation"/>
    <property type="evidence" value="ECO:0007669"/>
    <property type="project" value="UniProtKB-UniRule"/>
</dbReference>
<dbReference type="CDD" id="cd00364">
    <property type="entry name" value="Ribosomal_uS17"/>
    <property type="match status" value="1"/>
</dbReference>
<dbReference type="FunFam" id="2.40.50.140:FF:000014">
    <property type="entry name" value="30S ribosomal protein S17"/>
    <property type="match status" value="1"/>
</dbReference>
<dbReference type="Gene3D" id="2.40.50.140">
    <property type="entry name" value="Nucleic acid-binding proteins"/>
    <property type="match status" value="1"/>
</dbReference>
<dbReference type="HAMAP" id="MF_01345_B">
    <property type="entry name" value="Ribosomal_uS17_B"/>
    <property type="match status" value="1"/>
</dbReference>
<dbReference type="InterPro" id="IPR012340">
    <property type="entry name" value="NA-bd_OB-fold"/>
</dbReference>
<dbReference type="InterPro" id="IPR000266">
    <property type="entry name" value="Ribosomal_uS17"/>
</dbReference>
<dbReference type="InterPro" id="IPR019984">
    <property type="entry name" value="Ribosomal_uS17_bact/chlr"/>
</dbReference>
<dbReference type="InterPro" id="IPR019979">
    <property type="entry name" value="Ribosomal_uS17_CS"/>
</dbReference>
<dbReference type="NCBIfam" id="NF004123">
    <property type="entry name" value="PRK05610.1"/>
    <property type="match status" value="1"/>
</dbReference>
<dbReference type="NCBIfam" id="TIGR03635">
    <property type="entry name" value="uS17_bact"/>
    <property type="match status" value="1"/>
</dbReference>
<dbReference type="PANTHER" id="PTHR10744">
    <property type="entry name" value="40S RIBOSOMAL PROTEIN S11 FAMILY MEMBER"/>
    <property type="match status" value="1"/>
</dbReference>
<dbReference type="PANTHER" id="PTHR10744:SF1">
    <property type="entry name" value="SMALL RIBOSOMAL SUBUNIT PROTEIN US17M"/>
    <property type="match status" value="1"/>
</dbReference>
<dbReference type="Pfam" id="PF00366">
    <property type="entry name" value="Ribosomal_S17"/>
    <property type="match status" value="1"/>
</dbReference>
<dbReference type="PRINTS" id="PR00973">
    <property type="entry name" value="RIBOSOMALS17"/>
</dbReference>
<dbReference type="SUPFAM" id="SSF50249">
    <property type="entry name" value="Nucleic acid-binding proteins"/>
    <property type="match status" value="1"/>
</dbReference>
<dbReference type="PROSITE" id="PS00056">
    <property type="entry name" value="RIBOSOMAL_S17"/>
    <property type="match status" value="1"/>
</dbReference>
<gene>
    <name evidence="1" type="primary">rpsQ</name>
    <name type="ordered locus">HCH_06208</name>
</gene>
<name>RS17_HAHCH</name>
<reference key="1">
    <citation type="journal article" date="2005" name="Nucleic Acids Res.">
        <title>Genomic blueprint of Hahella chejuensis, a marine microbe producing an algicidal agent.</title>
        <authorList>
            <person name="Jeong H."/>
            <person name="Yim J.H."/>
            <person name="Lee C."/>
            <person name="Choi S.-H."/>
            <person name="Park Y.K."/>
            <person name="Yoon S.H."/>
            <person name="Hur C.-G."/>
            <person name="Kang H.-Y."/>
            <person name="Kim D."/>
            <person name="Lee H.H."/>
            <person name="Park K.H."/>
            <person name="Park S.-H."/>
            <person name="Park H.-S."/>
            <person name="Lee H.K."/>
            <person name="Oh T.K."/>
            <person name="Kim J.F."/>
        </authorList>
    </citation>
    <scope>NUCLEOTIDE SEQUENCE [LARGE SCALE GENOMIC DNA]</scope>
    <source>
        <strain>KCTC 2396</strain>
    </source>
</reference>
<comment type="function">
    <text evidence="1">One of the primary rRNA binding proteins, it binds specifically to the 5'-end of 16S ribosomal RNA.</text>
</comment>
<comment type="subunit">
    <text evidence="1">Part of the 30S ribosomal subunit.</text>
</comment>
<comment type="similarity">
    <text evidence="1">Belongs to the universal ribosomal protein uS17 family.</text>
</comment>
<organism>
    <name type="scientific">Hahella chejuensis (strain KCTC 2396)</name>
    <dbReference type="NCBI Taxonomy" id="349521"/>
    <lineage>
        <taxon>Bacteria</taxon>
        <taxon>Pseudomonadati</taxon>
        <taxon>Pseudomonadota</taxon>
        <taxon>Gammaproteobacteria</taxon>
        <taxon>Oceanospirillales</taxon>
        <taxon>Hahellaceae</taxon>
        <taxon>Hahella</taxon>
    </lineage>
</organism>
<sequence>MTANEKSVRTETGKVVSDKMDKSIVVLVERRVKHPLYGKYVKRSSKLHAHDENNECRIGDTVQVQESRPLSKTKSWKLVNIVERAEKV</sequence>
<keyword id="KW-1185">Reference proteome</keyword>
<keyword id="KW-0687">Ribonucleoprotein</keyword>
<keyword id="KW-0689">Ribosomal protein</keyword>
<keyword id="KW-0694">RNA-binding</keyword>
<keyword id="KW-0699">rRNA-binding</keyword>
<evidence type="ECO:0000255" key="1">
    <source>
        <dbReference type="HAMAP-Rule" id="MF_01345"/>
    </source>
</evidence>
<evidence type="ECO:0000305" key="2"/>
<accession>Q2S921</accession>
<feature type="chain" id="PRO_0000233487" description="Small ribosomal subunit protein uS17">
    <location>
        <begin position="1"/>
        <end position="88"/>
    </location>
</feature>